<sequence length="175" mass="19855">MSERIIMDDAAIQRTVTRIAHEILEYNKGTDNLILLGIKTRGEYLANRIQDKIHQIEQQRIPTGTIDITYFRDDIEHMSSLTTKDAIDIDTDITDKVVIIIDDVLYTGRTVRASLDAILLNARPIKIGLAALVDRGHRELPIRADFVGKNIPTSKEETVSVYLEEMDQRNAVIIK</sequence>
<organism>
    <name type="scientific">Staphylococcus aureus (strain COL)</name>
    <dbReference type="NCBI Taxonomy" id="93062"/>
    <lineage>
        <taxon>Bacteria</taxon>
        <taxon>Bacillati</taxon>
        <taxon>Bacillota</taxon>
        <taxon>Bacilli</taxon>
        <taxon>Bacillales</taxon>
        <taxon>Staphylococcaceae</taxon>
        <taxon>Staphylococcus</taxon>
    </lineage>
</organism>
<proteinExistence type="inferred from homology"/>
<reference key="1">
    <citation type="journal article" date="2005" name="J. Bacteriol.">
        <title>Insights on evolution of virulence and resistance from the complete genome analysis of an early methicillin-resistant Staphylococcus aureus strain and a biofilm-producing methicillin-resistant Staphylococcus epidermidis strain.</title>
        <authorList>
            <person name="Gill S.R."/>
            <person name="Fouts D.E."/>
            <person name="Archer G.L."/>
            <person name="Mongodin E.F."/>
            <person name="DeBoy R.T."/>
            <person name="Ravel J."/>
            <person name="Paulsen I.T."/>
            <person name="Kolonay J.F."/>
            <person name="Brinkac L.M."/>
            <person name="Beanan M.J."/>
            <person name="Dodson R.J."/>
            <person name="Daugherty S.C."/>
            <person name="Madupu R."/>
            <person name="Angiuoli S.V."/>
            <person name="Durkin A.S."/>
            <person name="Haft D.H."/>
            <person name="Vamathevan J.J."/>
            <person name="Khouri H."/>
            <person name="Utterback T.R."/>
            <person name="Lee C."/>
            <person name="Dimitrov G."/>
            <person name="Jiang L."/>
            <person name="Qin H."/>
            <person name="Weidman J."/>
            <person name="Tran K."/>
            <person name="Kang K.H."/>
            <person name="Hance I.R."/>
            <person name="Nelson K.E."/>
            <person name="Fraser C.M."/>
        </authorList>
    </citation>
    <scope>NUCLEOTIDE SEQUENCE [LARGE SCALE GENOMIC DNA]</scope>
    <source>
        <strain>COL</strain>
    </source>
</reference>
<evidence type="ECO:0000250" key="1"/>
<evidence type="ECO:0000255" key="2">
    <source>
        <dbReference type="HAMAP-Rule" id="MF_01219"/>
    </source>
</evidence>
<gene>
    <name evidence="2" type="primary">pyrR</name>
    <name type="ordered locus">SACOL1210</name>
</gene>
<comment type="function">
    <text evidence="2">Regulates transcriptional attenuation of the pyrimidine nucleotide (pyr) operon by binding in a uridine-dependent manner to specific sites on pyr mRNA. This disrupts an antiterminator hairpin in the RNA and favors formation of a downstream transcription terminator, leading to a reduced expression of downstream genes.</text>
</comment>
<comment type="function">
    <text evidence="2">Also displays a weak uracil phosphoribosyltransferase activity which is not physiologically significant.</text>
</comment>
<comment type="catalytic activity">
    <reaction evidence="2">
        <text>UMP + diphosphate = 5-phospho-alpha-D-ribose 1-diphosphate + uracil</text>
        <dbReference type="Rhea" id="RHEA:13017"/>
        <dbReference type="ChEBI" id="CHEBI:17568"/>
        <dbReference type="ChEBI" id="CHEBI:33019"/>
        <dbReference type="ChEBI" id="CHEBI:57865"/>
        <dbReference type="ChEBI" id="CHEBI:58017"/>
        <dbReference type="EC" id="2.4.2.9"/>
    </reaction>
</comment>
<comment type="subunit">
    <text evidence="2">Homodimer and homohexamer; in equilibrium.</text>
</comment>
<comment type="similarity">
    <text evidence="2">Belongs to the purine/pyrimidine phosphoribosyltransferase family. PyrR subfamily.</text>
</comment>
<feature type="chain" id="PRO_0000183053" description="Bifunctional protein PyrR">
    <location>
        <begin position="1"/>
        <end position="175"/>
    </location>
</feature>
<feature type="short sequence motif" description="PRPP-binding" evidence="2">
    <location>
        <begin position="98"/>
        <end position="110"/>
    </location>
</feature>
<feature type="binding site" evidence="1">
    <location>
        <begin position="40"/>
        <end position="41"/>
    </location>
    <ligand>
        <name>substrate</name>
    </ligand>
</feature>
<feature type="binding site" evidence="1">
    <location>
        <begin position="102"/>
        <end position="110"/>
    </location>
    <ligand>
        <name>substrate</name>
    </ligand>
</feature>
<feature type="binding site" evidence="1">
    <location>
        <position position="135"/>
    </location>
    <ligand>
        <name>substrate</name>
    </ligand>
</feature>
<feature type="binding site" evidence="1">
    <location>
        <position position="159"/>
    </location>
    <ligand>
        <name>substrate</name>
    </ligand>
</feature>
<protein>
    <recommendedName>
        <fullName evidence="2">Bifunctional protein PyrR</fullName>
    </recommendedName>
    <domain>
        <recommendedName>
            <fullName evidence="2">Pyrimidine operon regulatory protein</fullName>
        </recommendedName>
    </domain>
    <domain>
        <recommendedName>
            <fullName evidence="2">Uracil phosphoribosyltransferase</fullName>
            <shortName evidence="2">UPRTase</shortName>
            <ecNumber evidence="2">2.4.2.9</ecNumber>
        </recommendedName>
    </domain>
</protein>
<keyword id="KW-0328">Glycosyltransferase</keyword>
<keyword id="KW-0694">RNA-binding</keyword>
<keyword id="KW-0804">Transcription</keyword>
<keyword id="KW-0805">Transcription regulation</keyword>
<keyword id="KW-0806">Transcription termination</keyword>
<keyword id="KW-0808">Transferase</keyword>
<dbReference type="EC" id="2.4.2.9" evidence="2"/>
<dbReference type="EMBL" id="CP000046">
    <property type="protein sequence ID" value="AAW38047.1"/>
    <property type="molecule type" value="Genomic_DNA"/>
</dbReference>
<dbReference type="RefSeq" id="WP_000003870.1">
    <property type="nucleotide sequence ID" value="NZ_JBGOFO010000002.1"/>
</dbReference>
<dbReference type="SMR" id="Q5HGN4"/>
<dbReference type="KEGG" id="sac:SACOL1210"/>
<dbReference type="HOGENOM" id="CLU_094234_2_1_9"/>
<dbReference type="Proteomes" id="UP000000530">
    <property type="component" value="Chromosome"/>
</dbReference>
<dbReference type="GO" id="GO:0003723">
    <property type="term" value="F:RNA binding"/>
    <property type="evidence" value="ECO:0007669"/>
    <property type="project" value="UniProtKB-UniRule"/>
</dbReference>
<dbReference type="GO" id="GO:0004845">
    <property type="term" value="F:uracil phosphoribosyltransferase activity"/>
    <property type="evidence" value="ECO:0007669"/>
    <property type="project" value="UniProtKB-UniRule"/>
</dbReference>
<dbReference type="GO" id="GO:0006353">
    <property type="term" value="P:DNA-templated transcription termination"/>
    <property type="evidence" value="ECO:0007669"/>
    <property type="project" value="UniProtKB-UniRule"/>
</dbReference>
<dbReference type="CDD" id="cd06223">
    <property type="entry name" value="PRTases_typeI"/>
    <property type="match status" value="1"/>
</dbReference>
<dbReference type="FunFam" id="3.40.50.2020:FF:000020">
    <property type="entry name" value="Bifunctional protein PyrR"/>
    <property type="match status" value="1"/>
</dbReference>
<dbReference type="Gene3D" id="3.40.50.2020">
    <property type="match status" value="1"/>
</dbReference>
<dbReference type="HAMAP" id="MF_01219">
    <property type="entry name" value="PyrR"/>
    <property type="match status" value="1"/>
</dbReference>
<dbReference type="InterPro" id="IPR000836">
    <property type="entry name" value="PRibTrfase_dom"/>
</dbReference>
<dbReference type="InterPro" id="IPR029057">
    <property type="entry name" value="PRTase-like"/>
</dbReference>
<dbReference type="InterPro" id="IPR023050">
    <property type="entry name" value="PyrR"/>
</dbReference>
<dbReference type="InterPro" id="IPR050137">
    <property type="entry name" value="PyrR_bifunctional"/>
</dbReference>
<dbReference type="NCBIfam" id="NF003546">
    <property type="entry name" value="PRK05205.1-2"/>
    <property type="match status" value="1"/>
</dbReference>
<dbReference type="NCBIfam" id="NF003548">
    <property type="entry name" value="PRK05205.1-4"/>
    <property type="match status" value="1"/>
</dbReference>
<dbReference type="NCBIfam" id="NF003549">
    <property type="entry name" value="PRK05205.1-5"/>
    <property type="match status" value="1"/>
</dbReference>
<dbReference type="PANTHER" id="PTHR11608">
    <property type="entry name" value="BIFUNCTIONAL PROTEIN PYRR"/>
    <property type="match status" value="1"/>
</dbReference>
<dbReference type="PANTHER" id="PTHR11608:SF0">
    <property type="entry name" value="BIFUNCTIONAL PROTEIN PYRR"/>
    <property type="match status" value="1"/>
</dbReference>
<dbReference type="Pfam" id="PF00156">
    <property type="entry name" value="Pribosyltran"/>
    <property type="match status" value="1"/>
</dbReference>
<dbReference type="SUPFAM" id="SSF53271">
    <property type="entry name" value="PRTase-like"/>
    <property type="match status" value="1"/>
</dbReference>
<name>PYRR_STAAC</name>
<accession>Q5HGN4</accession>